<accession>Q9HYV6</accession>
<organism>
    <name type="scientific">Pseudomonas aeruginosa (strain ATCC 15692 / DSM 22644 / CIP 104116 / JCM 14847 / LMG 12228 / 1C / PRS 101 / PAO1)</name>
    <dbReference type="NCBI Taxonomy" id="208964"/>
    <lineage>
        <taxon>Bacteria</taxon>
        <taxon>Pseudomonadati</taxon>
        <taxon>Pseudomonadota</taxon>
        <taxon>Gammaproteobacteria</taxon>
        <taxon>Pseudomonadales</taxon>
        <taxon>Pseudomonadaceae</taxon>
        <taxon>Pseudomonas</taxon>
    </lineage>
</organism>
<reference key="1">
    <citation type="journal article" date="2000" name="Nature">
        <title>Complete genome sequence of Pseudomonas aeruginosa PAO1, an opportunistic pathogen.</title>
        <authorList>
            <person name="Stover C.K."/>
            <person name="Pham X.-Q.T."/>
            <person name="Erwin A.L."/>
            <person name="Mizoguchi S.D."/>
            <person name="Warrener P."/>
            <person name="Hickey M.J."/>
            <person name="Brinkman F.S.L."/>
            <person name="Hufnagle W.O."/>
            <person name="Kowalik D.J."/>
            <person name="Lagrou M."/>
            <person name="Garber R.L."/>
            <person name="Goltry L."/>
            <person name="Tolentino E."/>
            <person name="Westbrock-Wadman S."/>
            <person name="Yuan Y."/>
            <person name="Brody L.L."/>
            <person name="Coulter S.N."/>
            <person name="Folger K.R."/>
            <person name="Kas A."/>
            <person name="Larbig K."/>
            <person name="Lim R.M."/>
            <person name="Smith K.A."/>
            <person name="Spencer D.H."/>
            <person name="Wong G.K.-S."/>
            <person name="Wu Z."/>
            <person name="Paulsen I.T."/>
            <person name="Reizer J."/>
            <person name="Saier M.H. Jr."/>
            <person name="Hancock R.E.W."/>
            <person name="Lory S."/>
            <person name="Olson M.V."/>
        </authorList>
    </citation>
    <scope>NUCLEOTIDE SEQUENCE [LARGE SCALE GENOMIC DNA]</scope>
    <source>
        <strain>ATCC 15692 / DSM 22644 / CIP 104116 / JCM 14847 / LMG 12228 / 1C / PRS 101 / PAO1</strain>
    </source>
</reference>
<feature type="chain" id="PRO_0000067240" description="Putative ankyrin repeat protein PA3287">
    <location>
        <begin position="1"/>
        <end position="171"/>
    </location>
</feature>
<feature type="repeat" description="ANK 1">
    <location>
        <begin position="48"/>
        <end position="77"/>
    </location>
</feature>
<feature type="repeat" description="ANK 2">
    <location>
        <begin position="81"/>
        <end position="110"/>
    </location>
</feature>
<feature type="repeat" description="ANK 3">
    <location>
        <begin position="114"/>
        <end position="143"/>
    </location>
</feature>
<name>Y3287_PSEAE</name>
<sequence length="171" mass="18194">MTDSPRPELDMETQEFVHQLFDLARQGNSQRLEQLLQQGLPPNLRNHKGDSLLMLASYHGHADTVRLLLAYKADPDLRNLAGQTPLAGAAFKGDLAMVELLLAGGADVEGASADGKTALMMAAMFNQAEVAASLLAHGARRDAQDAAGLTPLAAARMMNAEATVALLSRPH</sequence>
<dbReference type="EMBL" id="AE004091">
    <property type="protein sequence ID" value="AAG06675.1"/>
    <property type="molecule type" value="Genomic_DNA"/>
</dbReference>
<dbReference type="PIR" id="H83233">
    <property type="entry name" value="H83233"/>
</dbReference>
<dbReference type="RefSeq" id="NP_251977.1">
    <property type="nucleotide sequence ID" value="NC_002516.2"/>
</dbReference>
<dbReference type="RefSeq" id="WP_003091630.1">
    <property type="nucleotide sequence ID" value="NZ_QZGE01000019.1"/>
</dbReference>
<dbReference type="SMR" id="Q9HYV6"/>
<dbReference type="STRING" id="208964.PA3287"/>
<dbReference type="PaxDb" id="208964-PA3287"/>
<dbReference type="DNASU" id="882450"/>
<dbReference type="GeneID" id="882450"/>
<dbReference type="KEGG" id="pae:PA3287"/>
<dbReference type="PATRIC" id="fig|208964.12.peg.3438"/>
<dbReference type="PseudoCAP" id="PA3287"/>
<dbReference type="HOGENOM" id="CLU_000134_18_1_6"/>
<dbReference type="InParanoid" id="Q9HYV6"/>
<dbReference type="OrthoDB" id="671583at2"/>
<dbReference type="PhylomeDB" id="Q9HYV6"/>
<dbReference type="BioCyc" id="PAER208964:G1FZ6-3348-MONOMER"/>
<dbReference type="Proteomes" id="UP000002438">
    <property type="component" value="Chromosome"/>
</dbReference>
<dbReference type="Gene3D" id="1.25.40.20">
    <property type="entry name" value="Ankyrin repeat-containing domain"/>
    <property type="match status" value="2"/>
</dbReference>
<dbReference type="InterPro" id="IPR002110">
    <property type="entry name" value="Ankyrin_rpt"/>
</dbReference>
<dbReference type="InterPro" id="IPR036770">
    <property type="entry name" value="Ankyrin_rpt-contain_sf"/>
</dbReference>
<dbReference type="PANTHER" id="PTHR24173">
    <property type="entry name" value="ANKYRIN REPEAT CONTAINING"/>
    <property type="match status" value="1"/>
</dbReference>
<dbReference type="PANTHER" id="PTHR24173:SF74">
    <property type="entry name" value="ANKYRIN REPEAT DOMAIN-CONTAINING PROTEIN 16"/>
    <property type="match status" value="1"/>
</dbReference>
<dbReference type="Pfam" id="PF00023">
    <property type="entry name" value="Ank"/>
    <property type="match status" value="1"/>
</dbReference>
<dbReference type="Pfam" id="PF12796">
    <property type="entry name" value="Ank_2"/>
    <property type="match status" value="1"/>
</dbReference>
<dbReference type="SMART" id="SM00248">
    <property type="entry name" value="ANK"/>
    <property type="match status" value="3"/>
</dbReference>
<dbReference type="SUPFAM" id="SSF48403">
    <property type="entry name" value="Ankyrin repeat"/>
    <property type="match status" value="1"/>
</dbReference>
<dbReference type="PROSITE" id="PS50297">
    <property type="entry name" value="ANK_REP_REGION"/>
    <property type="match status" value="1"/>
</dbReference>
<dbReference type="PROSITE" id="PS50088">
    <property type="entry name" value="ANK_REPEAT"/>
    <property type="match status" value="3"/>
</dbReference>
<keyword id="KW-0040">ANK repeat</keyword>
<keyword id="KW-1185">Reference proteome</keyword>
<keyword id="KW-0677">Repeat</keyword>
<gene>
    <name type="ordered locus">PA3287</name>
</gene>
<protein>
    <recommendedName>
        <fullName>Putative ankyrin repeat protein PA3287</fullName>
    </recommendedName>
</protein>
<proteinExistence type="predicted"/>